<reference key="1">
    <citation type="journal article" date="2006" name="Nat. Biotechnol.">
        <title>Genome sequence of the bioplastic-producing 'Knallgas' bacterium Ralstonia eutropha H16.</title>
        <authorList>
            <person name="Pohlmann A."/>
            <person name="Fricke W.F."/>
            <person name="Reinecke F."/>
            <person name="Kusian B."/>
            <person name="Liesegang H."/>
            <person name="Cramm R."/>
            <person name="Eitinger T."/>
            <person name="Ewering C."/>
            <person name="Poetter M."/>
            <person name="Schwartz E."/>
            <person name="Strittmatter A."/>
            <person name="Voss I."/>
            <person name="Gottschalk G."/>
            <person name="Steinbuechel A."/>
            <person name="Friedrich B."/>
            <person name="Bowien B."/>
        </authorList>
    </citation>
    <scope>NUCLEOTIDE SEQUENCE [LARGE SCALE GENOMIC DNA]</scope>
    <source>
        <strain>ATCC 17699 / DSM 428 / KCTC 22496 / NCIMB 10442 / H16 / Stanier 337</strain>
    </source>
</reference>
<dbReference type="EC" id="6.3.5.2" evidence="1"/>
<dbReference type="EMBL" id="AM260479">
    <property type="protein sequence ID" value="CAJ93128.1"/>
    <property type="molecule type" value="Genomic_DNA"/>
</dbReference>
<dbReference type="RefSeq" id="WP_011615464.1">
    <property type="nucleotide sequence ID" value="NC_008313.1"/>
</dbReference>
<dbReference type="SMR" id="Q0KA43"/>
<dbReference type="STRING" id="381666.H16_A2028"/>
<dbReference type="MEROPS" id="C26.957"/>
<dbReference type="KEGG" id="reh:H16_A2028"/>
<dbReference type="PATRIC" id="fig|381666.6.peg.2436"/>
<dbReference type="eggNOG" id="COG0518">
    <property type="taxonomic scope" value="Bacteria"/>
</dbReference>
<dbReference type="eggNOG" id="COG0519">
    <property type="taxonomic scope" value="Bacteria"/>
</dbReference>
<dbReference type="HOGENOM" id="CLU_014340_0_5_4"/>
<dbReference type="OrthoDB" id="9802219at2"/>
<dbReference type="UniPathway" id="UPA00189">
    <property type="reaction ID" value="UER00296"/>
</dbReference>
<dbReference type="Proteomes" id="UP000008210">
    <property type="component" value="Chromosome 1"/>
</dbReference>
<dbReference type="GO" id="GO:0005829">
    <property type="term" value="C:cytosol"/>
    <property type="evidence" value="ECO:0007669"/>
    <property type="project" value="TreeGrafter"/>
</dbReference>
<dbReference type="GO" id="GO:0005524">
    <property type="term" value="F:ATP binding"/>
    <property type="evidence" value="ECO:0007669"/>
    <property type="project" value="UniProtKB-UniRule"/>
</dbReference>
<dbReference type="GO" id="GO:0003921">
    <property type="term" value="F:GMP synthase activity"/>
    <property type="evidence" value="ECO:0007669"/>
    <property type="project" value="InterPro"/>
</dbReference>
<dbReference type="CDD" id="cd01742">
    <property type="entry name" value="GATase1_GMP_Synthase"/>
    <property type="match status" value="1"/>
</dbReference>
<dbReference type="CDD" id="cd01997">
    <property type="entry name" value="GMP_synthase_C"/>
    <property type="match status" value="1"/>
</dbReference>
<dbReference type="FunFam" id="3.30.300.10:FF:000002">
    <property type="entry name" value="GMP synthase [glutamine-hydrolyzing]"/>
    <property type="match status" value="1"/>
</dbReference>
<dbReference type="FunFam" id="3.40.50.620:FF:000001">
    <property type="entry name" value="GMP synthase [glutamine-hydrolyzing]"/>
    <property type="match status" value="1"/>
</dbReference>
<dbReference type="FunFam" id="3.40.50.880:FF:000001">
    <property type="entry name" value="GMP synthase [glutamine-hydrolyzing]"/>
    <property type="match status" value="1"/>
</dbReference>
<dbReference type="Gene3D" id="3.30.300.10">
    <property type="match status" value="1"/>
</dbReference>
<dbReference type="Gene3D" id="3.40.50.880">
    <property type="match status" value="1"/>
</dbReference>
<dbReference type="Gene3D" id="3.40.50.620">
    <property type="entry name" value="HUPs"/>
    <property type="match status" value="1"/>
</dbReference>
<dbReference type="HAMAP" id="MF_00344">
    <property type="entry name" value="GMP_synthase"/>
    <property type="match status" value="1"/>
</dbReference>
<dbReference type="InterPro" id="IPR029062">
    <property type="entry name" value="Class_I_gatase-like"/>
</dbReference>
<dbReference type="InterPro" id="IPR017926">
    <property type="entry name" value="GATASE"/>
</dbReference>
<dbReference type="InterPro" id="IPR001674">
    <property type="entry name" value="GMP_synth_C"/>
</dbReference>
<dbReference type="InterPro" id="IPR004739">
    <property type="entry name" value="GMP_synth_GATase"/>
</dbReference>
<dbReference type="InterPro" id="IPR022955">
    <property type="entry name" value="GMP_synthase"/>
</dbReference>
<dbReference type="InterPro" id="IPR025777">
    <property type="entry name" value="GMPS_ATP_PPase_dom"/>
</dbReference>
<dbReference type="InterPro" id="IPR022310">
    <property type="entry name" value="NAD/GMP_synthase"/>
</dbReference>
<dbReference type="InterPro" id="IPR014729">
    <property type="entry name" value="Rossmann-like_a/b/a_fold"/>
</dbReference>
<dbReference type="NCBIfam" id="TIGR00884">
    <property type="entry name" value="guaA_Cterm"/>
    <property type="match status" value="1"/>
</dbReference>
<dbReference type="NCBIfam" id="TIGR00888">
    <property type="entry name" value="guaA_Nterm"/>
    <property type="match status" value="1"/>
</dbReference>
<dbReference type="NCBIfam" id="NF000848">
    <property type="entry name" value="PRK00074.1"/>
    <property type="match status" value="1"/>
</dbReference>
<dbReference type="PANTHER" id="PTHR11922:SF2">
    <property type="entry name" value="GMP SYNTHASE [GLUTAMINE-HYDROLYZING]"/>
    <property type="match status" value="1"/>
</dbReference>
<dbReference type="PANTHER" id="PTHR11922">
    <property type="entry name" value="GMP SYNTHASE-RELATED"/>
    <property type="match status" value="1"/>
</dbReference>
<dbReference type="Pfam" id="PF00117">
    <property type="entry name" value="GATase"/>
    <property type="match status" value="1"/>
</dbReference>
<dbReference type="Pfam" id="PF00958">
    <property type="entry name" value="GMP_synt_C"/>
    <property type="match status" value="1"/>
</dbReference>
<dbReference type="Pfam" id="PF02540">
    <property type="entry name" value="NAD_synthase"/>
    <property type="match status" value="1"/>
</dbReference>
<dbReference type="SUPFAM" id="SSF52402">
    <property type="entry name" value="Adenine nucleotide alpha hydrolases-like"/>
    <property type="match status" value="1"/>
</dbReference>
<dbReference type="SUPFAM" id="SSF52317">
    <property type="entry name" value="Class I glutamine amidotransferase-like"/>
    <property type="match status" value="1"/>
</dbReference>
<dbReference type="SUPFAM" id="SSF54810">
    <property type="entry name" value="GMP synthetase C-terminal dimerisation domain"/>
    <property type="match status" value="1"/>
</dbReference>
<dbReference type="PROSITE" id="PS51273">
    <property type="entry name" value="GATASE_TYPE_1"/>
    <property type="match status" value="1"/>
</dbReference>
<dbReference type="PROSITE" id="PS51553">
    <property type="entry name" value="GMPS_ATP_PPASE"/>
    <property type="match status" value="1"/>
</dbReference>
<protein>
    <recommendedName>
        <fullName evidence="1">GMP synthase [glutamine-hydrolyzing]</fullName>
        <ecNumber evidence="1">6.3.5.2</ecNumber>
    </recommendedName>
    <alternativeName>
        <fullName evidence="1">GMP synthetase</fullName>
    </alternativeName>
    <alternativeName>
        <fullName evidence="1">Glutamine amidotransferase</fullName>
    </alternativeName>
</protein>
<organism>
    <name type="scientific">Cupriavidus necator (strain ATCC 17699 / DSM 428 / KCTC 22496 / NCIMB 10442 / H16 / Stanier 337)</name>
    <name type="common">Ralstonia eutropha</name>
    <dbReference type="NCBI Taxonomy" id="381666"/>
    <lineage>
        <taxon>Bacteria</taxon>
        <taxon>Pseudomonadati</taxon>
        <taxon>Pseudomonadota</taxon>
        <taxon>Betaproteobacteria</taxon>
        <taxon>Burkholderiales</taxon>
        <taxon>Burkholderiaceae</taxon>
        <taxon>Cupriavidus</taxon>
    </lineage>
</organism>
<evidence type="ECO:0000255" key="1">
    <source>
        <dbReference type="HAMAP-Rule" id="MF_00344"/>
    </source>
</evidence>
<comment type="function">
    <text evidence="1">Catalyzes the synthesis of GMP from XMP.</text>
</comment>
<comment type="catalytic activity">
    <reaction evidence="1">
        <text>XMP + L-glutamine + ATP + H2O = GMP + L-glutamate + AMP + diphosphate + 2 H(+)</text>
        <dbReference type="Rhea" id="RHEA:11680"/>
        <dbReference type="ChEBI" id="CHEBI:15377"/>
        <dbReference type="ChEBI" id="CHEBI:15378"/>
        <dbReference type="ChEBI" id="CHEBI:29985"/>
        <dbReference type="ChEBI" id="CHEBI:30616"/>
        <dbReference type="ChEBI" id="CHEBI:33019"/>
        <dbReference type="ChEBI" id="CHEBI:57464"/>
        <dbReference type="ChEBI" id="CHEBI:58115"/>
        <dbReference type="ChEBI" id="CHEBI:58359"/>
        <dbReference type="ChEBI" id="CHEBI:456215"/>
        <dbReference type="EC" id="6.3.5.2"/>
    </reaction>
</comment>
<comment type="pathway">
    <text evidence="1">Purine metabolism; GMP biosynthesis; GMP from XMP (L-Gln route): step 1/1.</text>
</comment>
<comment type="subunit">
    <text evidence="1">Homodimer.</text>
</comment>
<proteinExistence type="inferred from homology"/>
<feature type="chain" id="PRO_1000120374" description="GMP synthase [glutamine-hydrolyzing]">
    <location>
        <begin position="1"/>
        <end position="539"/>
    </location>
</feature>
<feature type="domain" description="Glutamine amidotransferase type-1" evidence="1">
    <location>
        <begin position="4"/>
        <end position="202"/>
    </location>
</feature>
<feature type="domain" description="GMPS ATP-PPase" evidence="1">
    <location>
        <begin position="203"/>
        <end position="395"/>
    </location>
</feature>
<feature type="active site" description="Nucleophile" evidence="1">
    <location>
        <position position="81"/>
    </location>
</feature>
<feature type="active site" evidence="1">
    <location>
        <position position="176"/>
    </location>
</feature>
<feature type="active site" evidence="1">
    <location>
        <position position="178"/>
    </location>
</feature>
<feature type="binding site" evidence="1">
    <location>
        <begin position="230"/>
        <end position="236"/>
    </location>
    <ligand>
        <name>ATP</name>
        <dbReference type="ChEBI" id="CHEBI:30616"/>
    </ligand>
</feature>
<gene>
    <name evidence="1" type="primary">guaA</name>
    <name type="ordered locus">H16_A2028</name>
</gene>
<sequence length="539" mass="59685">MHDKILILDFGSQVTQLIARRVREAHVYCEIHPNDVSDDFVREFAPKAIILSGSHASTYEDHQLRAPQAVWDLGVPVLGICYGMQTMAVQLGGKVEWSDHREFGYAEVRAHGHTNLLKDIEDFRTPEGHGMLKVWMSHGDKVAGLPPGFKLMASTPSCPIAGMADEARGYYAVQFHPEVTHTAKGRQMLERFVLGIAGCKPDWVMRDHIEEAVAKIREQVGDEEVILGLSGGVDSSVAAALIHRAIGDQLTCVFVDHGLLRQDEGKLVMEMFVGRLHAKVVHIDASEQFLGHLAGVTDPEQKRKIIGREFVEVFQAEARKLSNAKWLAQGTIYPDVVESGGTKTKKATTIKSHHNVGGLPETLGLKLLEPLRDLFKDEVRELGVALGLPPEMVYRHPFPGPGLGVRILGEVKRDYADLLRRADAIFIEELRKTLATEQDAAAGLCEPDQVGKSWYDLTSQAFAVFLPVKSVGVMGDGRTYDYVVALRAVQTTDFMTAHWAHLPYALLGRCSNRIINEVRGLNRVVYDVSGKPPATIEWE</sequence>
<name>GUAA_CUPNH</name>
<accession>Q0KA43</accession>
<keyword id="KW-0067">ATP-binding</keyword>
<keyword id="KW-0315">Glutamine amidotransferase</keyword>
<keyword id="KW-0332">GMP biosynthesis</keyword>
<keyword id="KW-0436">Ligase</keyword>
<keyword id="KW-0547">Nucleotide-binding</keyword>
<keyword id="KW-0658">Purine biosynthesis</keyword>
<keyword id="KW-1185">Reference proteome</keyword>